<keyword id="KW-0106">Calcium</keyword>
<keyword id="KW-0903">Direct protein sequencing</keyword>
<keyword id="KW-1015">Disulfide bond</keyword>
<keyword id="KW-0378">Hydrolase</keyword>
<keyword id="KW-0442">Lipid degradation</keyword>
<keyword id="KW-0443">Lipid metabolism</keyword>
<keyword id="KW-0479">Metal-binding</keyword>
<keyword id="KW-0964">Secreted</keyword>
<accession>P20251</accession>
<comment type="function">
    <text>PLA2 catalyzes the calcium-dependent hydrolysis of the 2-acyl groups in 3-sn-phosphoglycerides.</text>
</comment>
<comment type="catalytic activity">
    <reaction evidence="2 3">
        <text>a 1,2-diacyl-sn-glycero-3-phosphocholine + H2O = a 1-acyl-sn-glycero-3-phosphocholine + a fatty acid + H(+)</text>
        <dbReference type="Rhea" id="RHEA:15801"/>
        <dbReference type="ChEBI" id="CHEBI:15377"/>
        <dbReference type="ChEBI" id="CHEBI:15378"/>
        <dbReference type="ChEBI" id="CHEBI:28868"/>
        <dbReference type="ChEBI" id="CHEBI:57643"/>
        <dbReference type="ChEBI" id="CHEBI:58168"/>
        <dbReference type="EC" id="3.1.1.4"/>
    </reaction>
</comment>
<comment type="cofactor">
    <cofactor evidence="1">
        <name>Ca(2+)</name>
        <dbReference type="ChEBI" id="CHEBI:29108"/>
    </cofactor>
    <text evidence="1">Binds 1 Ca(2+) ion.</text>
</comment>
<comment type="subcellular location">
    <subcellularLocation>
        <location>Secreted</location>
    </subcellularLocation>
</comment>
<comment type="tissue specificity">
    <text>Expressed by the venom gland.</text>
</comment>
<comment type="toxic dose">
    <text evidence="4">LD(50) is 0.21 mg/kg by intravenous injection.</text>
</comment>
<comment type="similarity">
    <text evidence="5">Belongs to the phospholipase A2 family. Group I subfamily. D49 sub-subfamily.</text>
</comment>
<name>PA2A3_PSEAU</name>
<dbReference type="EC" id="3.1.1.4"/>
<dbReference type="PIR" id="B34860">
    <property type="entry name" value="B34860"/>
</dbReference>
<dbReference type="SMR" id="P20251"/>
<dbReference type="GO" id="GO:0005576">
    <property type="term" value="C:extracellular region"/>
    <property type="evidence" value="ECO:0007669"/>
    <property type="project" value="UniProtKB-SubCell"/>
</dbReference>
<dbReference type="GO" id="GO:0005509">
    <property type="term" value="F:calcium ion binding"/>
    <property type="evidence" value="ECO:0007669"/>
    <property type="project" value="InterPro"/>
</dbReference>
<dbReference type="GO" id="GO:0047498">
    <property type="term" value="F:calcium-dependent phospholipase A2 activity"/>
    <property type="evidence" value="ECO:0007669"/>
    <property type="project" value="TreeGrafter"/>
</dbReference>
<dbReference type="GO" id="GO:0005543">
    <property type="term" value="F:phospholipid binding"/>
    <property type="evidence" value="ECO:0007669"/>
    <property type="project" value="TreeGrafter"/>
</dbReference>
<dbReference type="GO" id="GO:0050482">
    <property type="term" value="P:arachidonate secretion"/>
    <property type="evidence" value="ECO:0007669"/>
    <property type="project" value="InterPro"/>
</dbReference>
<dbReference type="GO" id="GO:0016042">
    <property type="term" value="P:lipid catabolic process"/>
    <property type="evidence" value="ECO:0007669"/>
    <property type="project" value="UniProtKB-KW"/>
</dbReference>
<dbReference type="GO" id="GO:0006644">
    <property type="term" value="P:phospholipid metabolic process"/>
    <property type="evidence" value="ECO:0007669"/>
    <property type="project" value="InterPro"/>
</dbReference>
<dbReference type="CDD" id="cd00125">
    <property type="entry name" value="PLA2c"/>
    <property type="match status" value="1"/>
</dbReference>
<dbReference type="FunFam" id="1.20.90.10:FF:000007">
    <property type="entry name" value="Acidic phospholipase A2"/>
    <property type="match status" value="1"/>
</dbReference>
<dbReference type="Gene3D" id="1.20.90.10">
    <property type="entry name" value="Phospholipase A2 domain"/>
    <property type="match status" value="1"/>
</dbReference>
<dbReference type="InterPro" id="IPR001211">
    <property type="entry name" value="PLipase_A2"/>
</dbReference>
<dbReference type="InterPro" id="IPR033112">
    <property type="entry name" value="PLipase_A2_Asp_AS"/>
</dbReference>
<dbReference type="InterPro" id="IPR016090">
    <property type="entry name" value="PLipase_A2_dom"/>
</dbReference>
<dbReference type="InterPro" id="IPR036444">
    <property type="entry name" value="PLipase_A2_dom_sf"/>
</dbReference>
<dbReference type="InterPro" id="IPR033113">
    <property type="entry name" value="PLipase_A2_His_AS"/>
</dbReference>
<dbReference type="PANTHER" id="PTHR11716:SF51">
    <property type="entry name" value="PHOSPHOLIPASE A2"/>
    <property type="match status" value="1"/>
</dbReference>
<dbReference type="PANTHER" id="PTHR11716">
    <property type="entry name" value="PHOSPHOLIPASE A2 FAMILY MEMBER"/>
    <property type="match status" value="1"/>
</dbReference>
<dbReference type="Pfam" id="PF00068">
    <property type="entry name" value="Phospholip_A2_1"/>
    <property type="match status" value="1"/>
</dbReference>
<dbReference type="PRINTS" id="PR00389">
    <property type="entry name" value="PHPHLIPASEA2"/>
</dbReference>
<dbReference type="SMART" id="SM00085">
    <property type="entry name" value="PA2c"/>
    <property type="match status" value="1"/>
</dbReference>
<dbReference type="SUPFAM" id="SSF48619">
    <property type="entry name" value="Phospholipase A2, PLA2"/>
    <property type="match status" value="1"/>
</dbReference>
<dbReference type="PROSITE" id="PS00119">
    <property type="entry name" value="PA2_ASP"/>
    <property type="match status" value="1"/>
</dbReference>
<dbReference type="PROSITE" id="PS00118">
    <property type="entry name" value="PA2_HIS"/>
    <property type="match status" value="1"/>
</dbReference>
<sequence length="118" mass="13152">NLIQFGNMIQCANKGSRPTRHYMDYGCYCGWGGSGTPVDELDRCCKVHDDCYGEAEKKGCYPKLTLYSWDCTGNVPICSPKAECKDFVCACDAEAAKCFAKATYNDANWNIDTKTRCK</sequence>
<protein>
    <recommendedName>
        <fullName>Acidic phospholipase A2 PA-3</fullName>
        <shortName>svPLA2</shortName>
        <ecNumber>3.1.1.4</ecNumber>
    </recommendedName>
    <alternativeName>
        <fullName>Phosphatidylcholine 2-acylhydrolase</fullName>
    </alternativeName>
</protein>
<feature type="chain" id="PRO_0000161682" description="Acidic phospholipase A2 PA-3">
    <location>
        <begin position="1"/>
        <end position="118"/>
    </location>
</feature>
<feature type="active site" evidence="1">
    <location>
        <position position="48"/>
    </location>
</feature>
<feature type="active site" evidence="1">
    <location>
        <position position="92"/>
    </location>
</feature>
<feature type="binding site" evidence="1">
    <location>
        <position position="28"/>
    </location>
    <ligand>
        <name>Ca(2+)</name>
        <dbReference type="ChEBI" id="CHEBI:29108"/>
    </ligand>
</feature>
<feature type="binding site" evidence="1">
    <location>
        <position position="30"/>
    </location>
    <ligand>
        <name>Ca(2+)</name>
        <dbReference type="ChEBI" id="CHEBI:29108"/>
    </ligand>
</feature>
<feature type="binding site" evidence="1">
    <location>
        <position position="32"/>
    </location>
    <ligand>
        <name>Ca(2+)</name>
        <dbReference type="ChEBI" id="CHEBI:29108"/>
    </ligand>
</feature>
<feature type="binding site" evidence="1">
    <location>
        <position position="49"/>
    </location>
    <ligand>
        <name>Ca(2+)</name>
        <dbReference type="ChEBI" id="CHEBI:29108"/>
    </ligand>
</feature>
<feature type="disulfide bond" evidence="1">
    <location>
        <begin position="11"/>
        <end position="71"/>
    </location>
</feature>
<feature type="disulfide bond" evidence="1">
    <location>
        <begin position="27"/>
        <end position="117"/>
    </location>
</feature>
<feature type="disulfide bond" evidence="1">
    <location>
        <begin position="29"/>
        <end position="45"/>
    </location>
</feature>
<feature type="disulfide bond" evidence="1">
    <location>
        <begin position="44"/>
        <end position="98"/>
    </location>
</feature>
<feature type="disulfide bond" evidence="1">
    <location>
        <begin position="51"/>
        <end position="91"/>
    </location>
</feature>
<feature type="disulfide bond" evidence="1">
    <location>
        <begin position="60"/>
        <end position="84"/>
    </location>
</feature>
<feature type="disulfide bond" evidence="1">
    <location>
        <begin position="78"/>
        <end position="89"/>
    </location>
</feature>
<feature type="sequence variant">
    <original>T</original>
    <variation>P</variation>
    <location>
        <position position="103"/>
    </location>
</feature>
<proteinExistence type="evidence at protein level"/>
<reference key="1">
    <citation type="journal article" date="1990" name="Toxicon">
        <title>Amino acid sequences of eight phospholipases A2 from the venom of Australian king brown snake, Pseudechis australis.</title>
        <authorList>
            <person name="Takasaki C."/>
            <person name="Yutani F."/>
            <person name="Kajiyashiki T."/>
        </authorList>
    </citation>
    <scope>PROTEIN SEQUENCE</scope>
    <scope>TOXIC DOSE</scope>
    <source>
        <tissue>Venom</tissue>
    </source>
</reference>
<organism>
    <name type="scientific">Pseudechis australis</name>
    <name type="common">Mulga snake</name>
    <name type="synonym">King brown snake</name>
    <dbReference type="NCBI Taxonomy" id="8670"/>
    <lineage>
        <taxon>Eukaryota</taxon>
        <taxon>Metazoa</taxon>
        <taxon>Chordata</taxon>
        <taxon>Craniata</taxon>
        <taxon>Vertebrata</taxon>
        <taxon>Euteleostomi</taxon>
        <taxon>Lepidosauria</taxon>
        <taxon>Squamata</taxon>
        <taxon>Bifurcata</taxon>
        <taxon>Unidentata</taxon>
        <taxon>Episquamata</taxon>
        <taxon>Toxicofera</taxon>
        <taxon>Serpentes</taxon>
        <taxon>Colubroidea</taxon>
        <taxon>Elapidae</taxon>
        <taxon>Hydrophiinae</taxon>
        <taxon>Pseudechis</taxon>
    </lineage>
</organism>
<evidence type="ECO:0000250" key="1"/>
<evidence type="ECO:0000255" key="2">
    <source>
        <dbReference type="PROSITE-ProRule" id="PRU10035"/>
    </source>
</evidence>
<evidence type="ECO:0000255" key="3">
    <source>
        <dbReference type="PROSITE-ProRule" id="PRU10036"/>
    </source>
</evidence>
<evidence type="ECO:0000269" key="4">
    <source>
    </source>
</evidence>
<evidence type="ECO:0000305" key="5"/>